<sequence length="103" mass="11564">MYAVFQSGGKQHRVSEGQTVRLEKLDIATGETIEFAEVLMVANGEEVKIGVPFVDGGVIKAEVVAHGRGEKVKIVKFRRRKHYRKQQGHRQWFTDVKITGISA</sequence>
<gene>
    <name evidence="1" type="primary">rplU</name>
    <name type="ordered locus">SeSA_A3496</name>
</gene>
<name>RL21_SALSV</name>
<comment type="function">
    <text evidence="1">This protein binds to 23S rRNA in the presence of protein L20.</text>
</comment>
<comment type="subunit">
    <text evidence="1">Part of the 50S ribosomal subunit. Contacts protein L20.</text>
</comment>
<comment type="similarity">
    <text evidence="1">Belongs to the bacterial ribosomal protein bL21 family.</text>
</comment>
<keyword id="KW-0687">Ribonucleoprotein</keyword>
<keyword id="KW-0689">Ribosomal protein</keyword>
<keyword id="KW-0694">RNA-binding</keyword>
<keyword id="KW-0699">rRNA-binding</keyword>
<evidence type="ECO:0000255" key="1">
    <source>
        <dbReference type="HAMAP-Rule" id="MF_01363"/>
    </source>
</evidence>
<evidence type="ECO:0000305" key="2"/>
<reference key="1">
    <citation type="journal article" date="2011" name="J. Bacteriol.">
        <title>Comparative genomics of 28 Salmonella enterica isolates: evidence for CRISPR-mediated adaptive sublineage evolution.</title>
        <authorList>
            <person name="Fricke W.F."/>
            <person name="Mammel M.K."/>
            <person name="McDermott P.F."/>
            <person name="Tartera C."/>
            <person name="White D.G."/>
            <person name="Leclerc J.E."/>
            <person name="Ravel J."/>
            <person name="Cebula T.A."/>
        </authorList>
    </citation>
    <scope>NUCLEOTIDE SEQUENCE [LARGE SCALE GENOMIC DNA]</scope>
    <source>
        <strain>CVM19633</strain>
    </source>
</reference>
<dbReference type="EMBL" id="CP001127">
    <property type="protein sequence ID" value="ACF90327.1"/>
    <property type="molecule type" value="Genomic_DNA"/>
</dbReference>
<dbReference type="RefSeq" id="WP_000271398.1">
    <property type="nucleotide sequence ID" value="NC_011094.1"/>
</dbReference>
<dbReference type="SMR" id="B4TWF6"/>
<dbReference type="KEGG" id="sew:SeSA_A3496"/>
<dbReference type="HOGENOM" id="CLU_061463_3_3_6"/>
<dbReference type="Proteomes" id="UP000001865">
    <property type="component" value="Chromosome"/>
</dbReference>
<dbReference type="GO" id="GO:0005737">
    <property type="term" value="C:cytoplasm"/>
    <property type="evidence" value="ECO:0007669"/>
    <property type="project" value="UniProtKB-ARBA"/>
</dbReference>
<dbReference type="GO" id="GO:1990904">
    <property type="term" value="C:ribonucleoprotein complex"/>
    <property type="evidence" value="ECO:0007669"/>
    <property type="project" value="UniProtKB-KW"/>
</dbReference>
<dbReference type="GO" id="GO:0005840">
    <property type="term" value="C:ribosome"/>
    <property type="evidence" value="ECO:0007669"/>
    <property type="project" value="UniProtKB-KW"/>
</dbReference>
<dbReference type="GO" id="GO:0019843">
    <property type="term" value="F:rRNA binding"/>
    <property type="evidence" value="ECO:0007669"/>
    <property type="project" value="UniProtKB-UniRule"/>
</dbReference>
<dbReference type="GO" id="GO:0003735">
    <property type="term" value="F:structural constituent of ribosome"/>
    <property type="evidence" value="ECO:0007669"/>
    <property type="project" value="InterPro"/>
</dbReference>
<dbReference type="GO" id="GO:0006412">
    <property type="term" value="P:translation"/>
    <property type="evidence" value="ECO:0007669"/>
    <property type="project" value="UniProtKB-UniRule"/>
</dbReference>
<dbReference type="HAMAP" id="MF_01363">
    <property type="entry name" value="Ribosomal_bL21"/>
    <property type="match status" value="1"/>
</dbReference>
<dbReference type="InterPro" id="IPR028909">
    <property type="entry name" value="bL21-like"/>
</dbReference>
<dbReference type="InterPro" id="IPR036164">
    <property type="entry name" value="bL21-like_sf"/>
</dbReference>
<dbReference type="InterPro" id="IPR001787">
    <property type="entry name" value="Ribosomal_bL21"/>
</dbReference>
<dbReference type="InterPro" id="IPR018258">
    <property type="entry name" value="Ribosomal_bL21_CS"/>
</dbReference>
<dbReference type="NCBIfam" id="TIGR00061">
    <property type="entry name" value="L21"/>
    <property type="match status" value="1"/>
</dbReference>
<dbReference type="PANTHER" id="PTHR21349">
    <property type="entry name" value="50S RIBOSOMAL PROTEIN L21"/>
    <property type="match status" value="1"/>
</dbReference>
<dbReference type="PANTHER" id="PTHR21349:SF0">
    <property type="entry name" value="LARGE RIBOSOMAL SUBUNIT PROTEIN BL21M"/>
    <property type="match status" value="1"/>
</dbReference>
<dbReference type="Pfam" id="PF00829">
    <property type="entry name" value="Ribosomal_L21p"/>
    <property type="match status" value="1"/>
</dbReference>
<dbReference type="SUPFAM" id="SSF141091">
    <property type="entry name" value="L21p-like"/>
    <property type="match status" value="1"/>
</dbReference>
<dbReference type="PROSITE" id="PS01169">
    <property type="entry name" value="RIBOSOMAL_L21"/>
    <property type="match status" value="1"/>
</dbReference>
<proteinExistence type="inferred from homology"/>
<accession>B4TWF6</accession>
<organism>
    <name type="scientific">Salmonella schwarzengrund (strain CVM19633)</name>
    <dbReference type="NCBI Taxonomy" id="439843"/>
    <lineage>
        <taxon>Bacteria</taxon>
        <taxon>Pseudomonadati</taxon>
        <taxon>Pseudomonadota</taxon>
        <taxon>Gammaproteobacteria</taxon>
        <taxon>Enterobacterales</taxon>
        <taxon>Enterobacteriaceae</taxon>
        <taxon>Salmonella</taxon>
    </lineage>
</organism>
<feature type="chain" id="PRO_1000143849" description="Large ribosomal subunit protein bL21">
    <location>
        <begin position="1"/>
        <end position="103"/>
    </location>
</feature>
<protein>
    <recommendedName>
        <fullName evidence="1">Large ribosomal subunit protein bL21</fullName>
    </recommendedName>
    <alternativeName>
        <fullName evidence="2">50S ribosomal protein L21</fullName>
    </alternativeName>
</protein>